<protein>
    <recommendedName>
        <fullName evidence="1">tRNA(Met) cytidine acetate ligase</fullName>
        <ecNumber evidence="1">6.3.4.-</ecNumber>
    </recommendedName>
</protein>
<comment type="function">
    <text evidence="1">Catalyzes the formation of N(4)-acetylcytidine (ac(4)C) at the wobble position of elongator tRNA(Met), using acetate and ATP as substrates. First activates an acetate ion to form acetyladenylate (Ac-AMP) and then transfers the acetyl group to tRNA to form ac(4)C34.</text>
</comment>
<comment type="catalytic activity">
    <reaction evidence="1">
        <text>cytidine(34) in elongator tRNA(Met) + acetate + ATP = N(4)-acetylcytidine(34) in elongator tRNA(Met) + AMP + diphosphate</text>
        <dbReference type="Rhea" id="RHEA:58144"/>
        <dbReference type="Rhea" id="RHEA-COMP:10693"/>
        <dbReference type="Rhea" id="RHEA-COMP:10694"/>
        <dbReference type="ChEBI" id="CHEBI:30089"/>
        <dbReference type="ChEBI" id="CHEBI:30616"/>
        <dbReference type="ChEBI" id="CHEBI:33019"/>
        <dbReference type="ChEBI" id="CHEBI:74900"/>
        <dbReference type="ChEBI" id="CHEBI:82748"/>
        <dbReference type="ChEBI" id="CHEBI:456215"/>
    </reaction>
</comment>
<comment type="subcellular location">
    <subcellularLocation>
        <location evidence="1">Cytoplasm</location>
    </subcellularLocation>
</comment>
<comment type="similarity">
    <text evidence="1">Belongs to the TmcAL family.</text>
</comment>
<proteinExistence type="inferred from homology"/>
<name>TMCAL_CALBD</name>
<feature type="chain" id="PRO_1000185212" description="tRNA(Met) cytidine acetate ligase">
    <location>
        <begin position="1"/>
        <end position="400"/>
    </location>
</feature>
<feature type="binding site" evidence="1">
    <location>
        <begin position="7"/>
        <end position="20"/>
    </location>
    <ligand>
        <name>ATP</name>
        <dbReference type="ChEBI" id="CHEBI:30616"/>
    </ligand>
</feature>
<feature type="binding site" evidence="1">
    <location>
        <position position="101"/>
    </location>
    <ligand>
        <name>ATP</name>
        <dbReference type="ChEBI" id="CHEBI:30616"/>
    </ligand>
</feature>
<feature type="binding site" evidence="1">
    <location>
        <position position="159"/>
    </location>
    <ligand>
        <name>ATP</name>
        <dbReference type="ChEBI" id="CHEBI:30616"/>
    </ligand>
</feature>
<feature type="binding site" evidence="1">
    <location>
        <begin position="184"/>
        <end position="185"/>
    </location>
    <ligand>
        <name>ATP</name>
        <dbReference type="ChEBI" id="CHEBI:30616"/>
    </ligand>
</feature>
<reference key="1">
    <citation type="submission" date="2009-01" db="EMBL/GenBank/DDBJ databases">
        <title>Complete sequence of chromosome of Caldicellulosiruptor becscii DSM 6725.</title>
        <authorList>
            <person name="Lucas S."/>
            <person name="Copeland A."/>
            <person name="Lapidus A."/>
            <person name="Glavina del Rio T."/>
            <person name="Tice H."/>
            <person name="Bruce D."/>
            <person name="Goodwin L."/>
            <person name="Pitluck S."/>
            <person name="Sims D."/>
            <person name="Meincke L."/>
            <person name="Brettin T."/>
            <person name="Detter J.C."/>
            <person name="Han C."/>
            <person name="Larimer F."/>
            <person name="Land M."/>
            <person name="Hauser L."/>
            <person name="Kyrpides N."/>
            <person name="Ovchinnikova G."/>
            <person name="Kataeva I."/>
            <person name="Adams M.W.W."/>
        </authorList>
    </citation>
    <scope>NUCLEOTIDE SEQUENCE [LARGE SCALE GENOMIC DNA]</scope>
    <source>
        <strain>ATCC BAA-1888 / DSM 6725 / KCTC 15123 / Z-1320</strain>
    </source>
</reference>
<organism>
    <name type="scientific">Caldicellulosiruptor bescii (strain ATCC BAA-1888 / DSM 6725 / KCTC 15123 / Z-1320)</name>
    <name type="common">Anaerocellum thermophilum</name>
    <dbReference type="NCBI Taxonomy" id="521460"/>
    <lineage>
        <taxon>Bacteria</taxon>
        <taxon>Bacillati</taxon>
        <taxon>Bacillota</taxon>
        <taxon>Bacillota incertae sedis</taxon>
        <taxon>Caldicellulosiruptorales</taxon>
        <taxon>Caldicellulosiruptoraceae</taxon>
        <taxon>Caldicellulosiruptor</taxon>
    </lineage>
</organism>
<gene>
    <name evidence="1" type="primary">tmcAL</name>
    <name type="ordered locus">Athe_1231</name>
</gene>
<dbReference type="EC" id="6.3.4.-" evidence="1"/>
<dbReference type="EMBL" id="CP001393">
    <property type="protein sequence ID" value="ACM60331.1"/>
    <property type="molecule type" value="Genomic_DNA"/>
</dbReference>
<dbReference type="RefSeq" id="WP_015907722.1">
    <property type="nucleotide sequence ID" value="NC_012034.1"/>
</dbReference>
<dbReference type="SMR" id="B9MRM7"/>
<dbReference type="STRING" id="521460.Athe_1231"/>
<dbReference type="GeneID" id="31772579"/>
<dbReference type="KEGG" id="ate:Athe_1231"/>
<dbReference type="eggNOG" id="COG1323">
    <property type="taxonomic scope" value="Bacteria"/>
</dbReference>
<dbReference type="HOGENOM" id="CLU_038915_0_1_9"/>
<dbReference type="Proteomes" id="UP000007723">
    <property type="component" value="Chromosome"/>
</dbReference>
<dbReference type="GO" id="GO:0005737">
    <property type="term" value="C:cytoplasm"/>
    <property type="evidence" value="ECO:0007669"/>
    <property type="project" value="UniProtKB-SubCell"/>
</dbReference>
<dbReference type="GO" id="GO:0005524">
    <property type="term" value="F:ATP binding"/>
    <property type="evidence" value="ECO:0007669"/>
    <property type="project" value="UniProtKB-KW"/>
</dbReference>
<dbReference type="GO" id="GO:0016879">
    <property type="term" value="F:ligase activity, forming carbon-nitrogen bonds"/>
    <property type="evidence" value="ECO:0007669"/>
    <property type="project" value="UniProtKB-UniRule"/>
</dbReference>
<dbReference type="GO" id="GO:0000049">
    <property type="term" value="F:tRNA binding"/>
    <property type="evidence" value="ECO:0007669"/>
    <property type="project" value="UniProtKB-KW"/>
</dbReference>
<dbReference type="GO" id="GO:0006400">
    <property type="term" value="P:tRNA modification"/>
    <property type="evidence" value="ECO:0007669"/>
    <property type="project" value="UniProtKB-UniRule"/>
</dbReference>
<dbReference type="Gene3D" id="3.40.50.620">
    <property type="entry name" value="HUPs"/>
    <property type="match status" value="1"/>
</dbReference>
<dbReference type="HAMAP" id="MF_01539">
    <property type="entry name" value="TmcAL"/>
    <property type="match status" value="1"/>
</dbReference>
<dbReference type="InterPro" id="IPR014729">
    <property type="entry name" value="Rossmann-like_a/b/a_fold"/>
</dbReference>
<dbReference type="InterPro" id="IPR008513">
    <property type="entry name" value="tRNA(Met)_cyd_acetate_ligase"/>
</dbReference>
<dbReference type="NCBIfam" id="NF010191">
    <property type="entry name" value="PRK13670.1"/>
    <property type="match status" value="1"/>
</dbReference>
<dbReference type="PANTHER" id="PTHR37825">
    <property type="entry name" value="TRNA(MET) CYTIDINE ACETATE LIGASE"/>
    <property type="match status" value="1"/>
</dbReference>
<dbReference type="PANTHER" id="PTHR37825:SF1">
    <property type="entry name" value="TRNA(MET) CYTIDINE ACETATE LIGASE"/>
    <property type="match status" value="1"/>
</dbReference>
<dbReference type="Pfam" id="PF05636">
    <property type="entry name" value="HIGH_NTase1"/>
    <property type="match status" value="1"/>
</dbReference>
<dbReference type="SUPFAM" id="SSF52374">
    <property type="entry name" value="Nucleotidylyl transferase"/>
    <property type="match status" value="1"/>
</dbReference>
<sequence length="400" mass="46363">MRVAGIIVEYNPFHNGHLYHLQKTREITNADIVVGVMSGNFIQRGEPAIVNKWARTKMAILNGVDVIFELPFAYACNSAEIFAYGAISILNQLGVDFIVFGSECGDIDKLKETAKHLAFEEDDFKSSLKSYLKEGYSFPKARELALIKTCKTNIEFSSNNILGIEYIKWIYRLNSKIEPFTIRRIGASYNDPNLTQDTYASATAIRRNINNLHAIKNKMPSVSYEILLEEFESGRGPVILEDYFKLFIYNAIVVPDFLKNKIDVKEGLENRFEKYIFNSPSAKNLLENVKTKRYTLTRLQRIFIHAIVRNNFDQKALLSITPYVRVLGFNYKGKEYLNKIKDKIEYITKLNQQWLKNPQYKELLELEIRSSMLHALQYKDFHKYLQTEFKSSPIYISSRS</sequence>
<evidence type="ECO:0000255" key="1">
    <source>
        <dbReference type="HAMAP-Rule" id="MF_01539"/>
    </source>
</evidence>
<accession>B9MRM7</accession>
<keyword id="KW-0067">ATP-binding</keyword>
<keyword id="KW-0963">Cytoplasm</keyword>
<keyword id="KW-0436">Ligase</keyword>
<keyword id="KW-0547">Nucleotide-binding</keyword>
<keyword id="KW-0694">RNA-binding</keyword>
<keyword id="KW-0819">tRNA processing</keyword>
<keyword id="KW-0820">tRNA-binding</keyword>